<reference key="1">
    <citation type="journal article" date="2005" name="Genome Biol.">
        <title>Full-length cDNAs from chicken bursal lymphocytes to facilitate gene function analysis.</title>
        <authorList>
            <person name="Caldwell R.B."/>
            <person name="Kierzek A.M."/>
            <person name="Arakawa H."/>
            <person name="Bezzubov Y."/>
            <person name="Zaim J."/>
            <person name="Fiedler P."/>
            <person name="Kutter S."/>
            <person name="Blagodatski A."/>
            <person name="Kostovska D."/>
            <person name="Koter M."/>
            <person name="Plachy J."/>
            <person name="Carninci P."/>
            <person name="Hayashizaki Y."/>
            <person name="Buerstedde J.-M."/>
        </authorList>
    </citation>
    <scope>NUCLEOTIDE SEQUENCE [LARGE SCALE MRNA] (ISOFORMS 1 AND 2)</scope>
    <source>
        <strain>CB</strain>
        <tissue>Bursa of Fabricius</tissue>
    </source>
</reference>
<feature type="transit peptide" description="Mitochondrion" evidence="2">
    <location>
        <begin position="1"/>
        <end status="unknown"/>
    </location>
</feature>
<feature type="chain" id="PRO_0000382742" description="Hydroxyacylglutathione hydrolase, mitochondrial">
    <location>
        <begin status="unknown"/>
        <end position="310"/>
    </location>
</feature>
<feature type="binding site" evidence="1">
    <location>
        <position position="104"/>
    </location>
    <ligand>
        <name>Zn(2+)</name>
        <dbReference type="ChEBI" id="CHEBI:29105"/>
        <label>1</label>
    </ligand>
</feature>
<feature type="binding site" evidence="1">
    <location>
        <position position="106"/>
    </location>
    <ligand>
        <name>Zn(2+)</name>
        <dbReference type="ChEBI" id="CHEBI:29105"/>
        <label>1</label>
    </ligand>
</feature>
<feature type="binding site" evidence="1">
    <location>
        <position position="108"/>
    </location>
    <ligand>
        <name>Zn(2+)</name>
        <dbReference type="ChEBI" id="CHEBI:29105"/>
        <label>2</label>
    </ligand>
</feature>
<feature type="binding site" evidence="1">
    <location>
        <position position="109"/>
    </location>
    <ligand>
        <name>Zn(2+)</name>
        <dbReference type="ChEBI" id="CHEBI:29105"/>
        <label>2</label>
    </ligand>
</feature>
<feature type="binding site" evidence="1">
    <location>
        <position position="160"/>
    </location>
    <ligand>
        <name>Zn(2+)</name>
        <dbReference type="ChEBI" id="CHEBI:29105"/>
        <label>1</label>
    </ligand>
</feature>
<feature type="binding site" evidence="1">
    <location>
        <position position="184"/>
    </location>
    <ligand>
        <name>Zn(2+)</name>
        <dbReference type="ChEBI" id="CHEBI:29105"/>
        <label>1</label>
    </ligand>
</feature>
<feature type="binding site" evidence="1">
    <location>
        <position position="184"/>
    </location>
    <ligand>
        <name>Zn(2+)</name>
        <dbReference type="ChEBI" id="CHEBI:29105"/>
        <label>2</label>
    </ligand>
</feature>
<feature type="binding site" evidence="1">
    <location>
        <begin position="193"/>
        <end position="195"/>
    </location>
    <ligand>
        <name>substrate</name>
    </ligand>
</feature>
<feature type="binding site" evidence="1">
    <location>
        <begin position="223"/>
        <end position="225"/>
    </location>
    <ligand>
        <name>substrate</name>
    </ligand>
</feature>
<feature type="binding site" evidence="1">
    <location>
        <position position="223"/>
    </location>
    <ligand>
        <name>Zn(2+)</name>
        <dbReference type="ChEBI" id="CHEBI:29105"/>
        <label>2</label>
    </ligand>
</feature>
<feature type="binding site" evidence="1">
    <location>
        <begin position="299"/>
        <end position="302"/>
    </location>
    <ligand>
        <name>substrate</name>
    </ligand>
</feature>
<feature type="splice variant" id="VSP_037933" description="In isoform 2." evidence="3">
    <location>
        <begin position="1"/>
        <end position="50"/>
    </location>
</feature>
<protein>
    <recommendedName>
        <fullName>Hydroxyacylglutathione hydrolase, mitochondrial</fullName>
        <ecNumber evidence="1">3.1.2.6</ecNumber>
    </recommendedName>
    <alternativeName>
        <fullName>Glyoxalase II</fullName>
        <shortName>Glx II</shortName>
    </alternativeName>
</protein>
<dbReference type="EC" id="3.1.2.6" evidence="1"/>
<dbReference type="EMBL" id="AJ720961">
    <property type="protein sequence ID" value="CAG32620.1"/>
    <property type="molecule type" value="mRNA"/>
</dbReference>
<dbReference type="RefSeq" id="NP_001012807.1">
    <property type="nucleotide sequence ID" value="NM_001012789.2"/>
</dbReference>
<dbReference type="RefSeq" id="XP_015149680.1">
    <molecule id="Q5ZI23-2"/>
    <property type="nucleotide sequence ID" value="XM_015294194.4"/>
</dbReference>
<dbReference type="RefSeq" id="XP_015149681.1">
    <property type="nucleotide sequence ID" value="XM_015294195.1"/>
</dbReference>
<dbReference type="RefSeq" id="XP_015149682.1">
    <molecule id="Q5ZI23-2"/>
    <property type="nucleotide sequence ID" value="XM_015294196.4"/>
</dbReference>
<dbReference type="RefSeq" id="XP_015149683.1">
    <molecule id="Q5ZI23-2"/>
    <property type="nucleotide sequence ID" value="XM_015294197.4"/>
</dbReference>
<dbReference type="RefSeq" id="XP_015149684.1">
    <molecule id="Q5ZI23-2"/>
    <property type="nucleotide sequence ID" value="XM_015294198.4"/>
</dbReference>
<dbReference type="RefSeq" id="XP_015149685.1">
    <property type="nucleotide sequence ID" value="XM_015294199.1"/>
</dbReference>
<dbReference type="RefSeq" id="XP_015149686.1">
    <molecule id="Q5ZI23-2"/>
    <property type="nucleotide sequence ID" value="XM_015294200.4"/>
</dbReference>
<dbReference type="RefSeq" id="XP_015149687.1">
    <molecule id="Q5ZI23-2"/>
    <property type="nucleotide sequence ID" value="XM_015294201.4"/>
</dbReference>
<dbReference type="RefSeq" id="XP_025010859.1">
    <molecule id="Q5ZI23-2"/>
    <property type="nucleotide sequence ID" value="XM_025155091.3"/>
</dbReference>
<dbReference type="RefSeq" id="XP_046756581.1">
    <molecule id="Q5ZI23-2"/>
    <property type="nucleotide sequence ID" value="XM_046900625.1"/>
</dbReference>
<dbReference type="RefSeq" id="XP_046756582.1">
    <molecule id="Q5ZI23-2"/>
    <property type="nucleotide sequence ID" value="XM_046900626.1"/>
</dbReference>
<dbReference type="RefSeq" id="XP_046756583.1">
    <molecule id="Q5ZI23-2"/>
    <property type="nucleotide sequence ID" value="XM_046900627.1"/>
</dbReference>
<dbReference type="RefSeq" id="XP_046756584.1">
    <molecule id="Q5ZI23-2"/>
    <property type="nucleotide sequence ID" value="XM_046900628.1"/>
</dbReference>
<dbReference type="RefSeq" id="XP_046756585.1">
    <molecule id="Q5ZI23-2"/>
    <property type="nucleotide sequence ID" value="XM_046900629.1"/>
</dbReference>
<dbReference type="RefSeq" id="XP_046756586.1">
    <molecule id="Q5ZI23-2"/>
    <property type="nucleotide sequence ID" value="XM_046900630.1"/>
</dbReference>
<dbReference type="RefSeq" id="XP_046756587.1">
    <molecule id="Q5ZI23-2"/>
    <property type="nucleotide sequence ID" value="XM_046900631.1"/>
</dbReference>
<dbReference type="RefSeq" id="XP_046756588.1">
    <molecule id="Q5ZI23-2"/>
    <property type="nucleotide sequence ID" value="XM_046900632.1"/>
</dbReference>
<dbReference type="RefSeq" id="XP_046756589.1">
    <molecule id="Q5ZI23-2"/>
    <property type="nucleotide sequence ID" value="XM_046900633.1"/>
</dbReference>
<dbReference type="RefSeq" id="XP_046756590.1">
    <molecule id="Q5ZI23-2"/>
    <property type="nucleotide sequence ID" value="XM_046900634.1"/>
</dbReference>
<dbReference type="RefSeq" id="XP_046756591.1">
    <molecule id="Q5ZI23-2"/>
    <property type="nucleotide sequence ID" value="XM_046900635.1"/>
</dbReference>
<dbReference type="RefSeq" id="XP_046756592.1">
    <molecule id="Q5ZI23-2"/>
    <property type="nucleotide sequence ID" value="XM_046900636.1"/>
</dbReference>
<dbReference type="RefSeq" id="XP_046756593.1">
    <molecule id="Q5ZI23-2"/>
    <property type="nucleotide sequence ID" value="XM_046900637.1"/>
</dbReference>
<dbReference type="RefSeq" id="XP_046756594.1">
    <molecule id="Q5ZI23-2"/>
    <property type="nucleotide sequence ID" value="XM_046900638.1"/>
</dbReference>
<dbReference type="RefSeq" id="XP_046756595.1">
    <molecule id="Q5ZI23-2"/>
    <property type="nucleotide sequence ID" value="XM_046900639.1"/>
</dbReference>
<dbReference type="RefSeq" id="XP_046783353.1">
    <molecule id="Q5ZI23-2"/>
    <property type="nucleotide sequence ID" value="XM_046927397.1"/>
</dbReference>
<dbReference type="RefSeq" id="XP_046783357.1">
    <molecule id="Q5ZI23-2"/>
    <property type="nucleotide sequence ID" value="XM_046927401.1"/>
</dbReference>
<dbReference type="RefSeq" id="XP_046783358.1">
    <molecule id="Q5ZI23-2"/>
    <property type="nucleotide sequence ID" value="XM_046927402.1"/>
</dbReference>
<dbReference type="RefSeq" id="XP_046783359.1">
    <molecule id="Q5ZI23-2"/>
    <property type="nucleotide sequence ID" value="XM_046927403.1"/>
</dbReference>
<dbReference type="RefSeq" id="XP_046783360.1">
    <molecule id="Q5ZI23-2"/>
    <property type="nucleotide sequence ID" value="XM_046927404.1"/>
</dbReference>
<dbReference type="RefSeq" id="XP_046783361.1">
    <molecule id="Q5ZI23-2"/>
    <property type="nucleotide sequence ID" value="XM_046927405.1"/>
</dbReference>
<dbReference type="RefSeq" id="XP_046783362.1">
    <molecule id="Q5ZI23-2"/>
    <property type="nucleotide sequence ID" value="XM_046927406.1"/>
</dbReference>
<dbReference type="RefSeq" id="XP_046783363.1">
    <molecule id="Q5ZI23-2"/>
    <property type="nucleotide sequence ID" value="XM_046927407.1"/>
</dbReference>
<dbReference type="RefSeq" id="XP_046783364.1">
    <molecule id="Q5ZI23-2"/>
    <property type="nucleotide sequence ID" value="XM_046927408.1"/>
</dbReference>
<dbReference type="RefSeq" id="XP_046783365.1">
    <molecule id="Q5ZI23-2"/>
    <property type="nucleotide sequence ID" value="XM_046927409.1"/>
</dbReference>
<dbReference type="RefSeq" id="XP_046783366.1">
    <molecule id="Q5ZI23-2"/>
    <property type="nucleotide sequence ID" value="XM_046927410.1"/>
</dbReference>
<dbReference type="RefSeq" id="XP_046783367.1">
    <molecule id="Q5ZI23-2"/>
    <property type="nucleotide sequence ID" value="XM_046927411.1"/>
</dbReference>
<dbReference type="RefSeq" id="XP_046783368.1">
    <molecule id="Q5ZI23-2"/>
    <property type="nucleotide sequence ID" value="XM_046927412.1"/>
</dbReference>
<dbReference type="RefSeq" id="XP_046783369.1">
    <molecule id="Q5ZI23-2"/>
    <property type="nucleotide sequence ID" value="XM_046927413.1"/>
</dbReference>
<dbReference type="RefSeq" id="XP_046783370.1">
    <molecule id="Q5ZI23-2"/>
    <property type="nucleotide sequence ID" value="XM_046927414.1"/>
</dbReference>
<dbReference type="RefSeq" id="XP_046783371.1">
    <molecule id="Q5ZI23-2"/>
    <property type="nucleotide sequence ID" value="XM_046927415.1"/>
</dbReference>
<dbReference type="RefSeq" id="XP_046783372.1">
    <molecule id="Q5ZI23-2"/>
    <property type="nucleotide sequence ID" value="XM_046927416.1"/>
</dbReference>
<dbReference type="RefSeq" id="XP_046783373.1">
    <molecule id="Q5ZI23-2"/>
    <property type="nucleotide sequence ID" value="XM_046927417.1"/>
</dbReference>
<dbReference type="RefSeq" id="XP_046783374.1">
    <molecule id="Q5ZI23-2"/>
    <property type="nucleotide sequence ID" value="XM_046927418.1"/>
</dbReference>
<dbReference type="RefSeq" id="XP_046783375.1">
    <molecule id="Q5ZI23-2"/>
    <property type="nucleotide sequence ID" value="XM_046927419.1"/>
</dbReference>
<dbReference type="RefSeq" id="XP_046783376.1">
    <molecule id="Q5ZI23-2"/>
    <property type="nucleotide sequence ID" value="XM_046927420.1"/>
</dbReference>
<dbReference type="SMR" id="Q5ZI23"/>
<dbReference type="FunCoup" id="Q5ZI23">
    <property type="interactions" value="2280"/>
</dbReference>
<dbReference type="STRING" id="9031.ENSGALP00000049200"/>
<dbReference type="PaxDb" id="9031-ENSGALP00000008657"/>
<dbReference type="GeneID" id="416537"/>
<dbReference type="KEGG" id="gga:416537"/>
<dbReference type="CTD" id="3029"/>
<dbReference type="VEuPathDB" id="HostDB:geneid_416537"/>
<dbReference type="eggNOG" id="KOG0813">
    <property type="taxonomic scope" value="Eukaryota"/>
</dbReference>
<dbReference type="InParanoid" id="Q5ZI23"/>
<dbReference type="OMA" id="NYIWLLQ"/>
<dbReference type="OrthoDB" id="515692at2759"/>
<dbReference type="PhylomeDB" id="Q5ZI23"/>
<dbReference type="Reactome" id="R-GGA-70268">
    <property type="pathway name" value="Pyruvate metabolism"/>
</dbReference>
<dbReference type="PRO" id="PR:Q5ZI23"/>
<dbReference type="Proteomes" id="UP000000539">
    <property type="component" value="Chromosome 14"/>
</dbReference>
<dbReference type="Bgee" id="ENSGALG00000005398">
    <property type="expression patterns" value="Expressed in kidney and 12 other cell types or tissues"/>
</dbReference>
<dbReference type="GO" id="GO:0005759">
    <property type="term" value="C:mitochondrial matrix"/>
    <property type="evidence" value="ECO:0007669"/>
    <property type="project" value="UniProtKB-SubCell"/>
</dbReference>
<dbReference type="GO" id="GO:0005739">
    <property type="term" value="C:mitochondrion"/>
    <property type="evidence" value="ECO:0000318"/>
    <property type="project" value="GO_Central"/>
</dbReference>
<dbReference type="GO" id="GO:0004416">
    <property type="term" value="F:hydroxyacylglutathione hydrolase activity"/>
    <property type="evidence" value="ECO:0000250"/>
    <property type="project" value="UniProtKB"/>
</dbReference>
<dbReference type="GO" id="GO:0046872">
    <property type="term" value="F:metal ion binding"/>
    <property type="evidence" value="ECO:0007669"/>
    <property type="project" value="UniProtKB-KW"/>
</dbReference>
<dbReference type="GO" id="GO:0006749">
    <property type="term" value="P:glutathione metabolic process"/>
    <property type="evidence" value="ECO:0000318"/>
    <property type="project" value="GO_Central"/>
</dbReference>
<dbReference type="GO" id="GO:0019853">
    <property type="term" value="P:L-ascorbic acid biosynthetic process"/>
    <property type="evidence" value="ECO:0000304"/>
    <property type="project" value="AgBase"/>
</dbReference>
<dbReference type="GO" id="GO:0019243">
    <property type="term" value="P:methylglyoxal catabolic process to D-lactate via S-lactoyl-glutathione"/>
    <property type="evidence" value="ECO:0007669"/>
    <property type="project" value="InterPro"/>
</dbReference>
<dbReference type="CDD" id="cd07723">
    <property type="entry name" value="hydroxyacylglutathione_hydrolase_MBL-fold"/>
    <property type="match status" value="1"/>
</dbReference>
<dbReference type="FunFam" id="3.60.15.10:FF:000019">
    <property type="entry name" value="Hydroxyacylglutathione hydrolase, mitochondrial"/>
    <property type="match status" value="1"/>
</dbReference>
<dbReference type="Gene3D" id="3.60.15.10">
    <property type="entry name" value="Ribonuclease Z/Hydroxyacylglutathione hydrolase-like"/>
    <property type="match status" value="1"/>
</dbReference>
<dbReference type="HAMAP" id="MF_01374">
    <property type="entry name" value="Glyoxalase_2"/>
    <property type="match status" value="1"/>
</dbReference>
<dbReference type="InterPro" id="IPR035680">
    <property type="entry name" value="Clx_II_MBL"/>
</dbReference>
<dbReference type="InterPro" id="IPR032282">
    <property type="entry name" value="HAGH_C"/>
</dbReference>
<dbReference type="InterPro" id="IPR017782">
    <property type="entry name" value="Hydroxyacylglutathione_Hdrlase"/>
</dbReference>
<dbReference type="InterPro" id="IPR001279">
    <property type="entry name" value="Metallo-B-lactamas"/>
</dbReference>
<dbReference type="InterPro" id="IPR036866">
    <property type="entry name" value="RibonucZ/Hydroxyglut_hydro"/>
</dbReference>
<dbReference type="NCBIfam" id="TIGR03413">
    <property type="entry name" value="GSH_gloB"/>
    <property type="match status" value="1"/>
</dbReference>
<dbReference type="PANTHER" id="PTHR11935">
    <property type="entry name" value="BETA LACTAMASE DOMAIN"/>
    <property type="match status" value="1"/>
</dbReference>
<dbReference type="PANTHER" id="PTHR11935:SF80">
    <property type="entry name" value="HYDROXYACYLGLUTATHIONE HYDROLASE, MITOCHONDRIAL"/>
    <property type="match status" value="1"/>
</dbReference>
<dbReference type="Pfam" id="PF16123">
    <property type="entry name" value="HAGH_C"/>
    <property type="match status" value="1"/>
</dbReference>
<dbReference type="Pfam" id="PF00753">
    <property type="entry name" value="Lactamase_B"/>
    <property type="match status" value="1"/>
</dbReference>
<dbReference type="PIRSF" id="PIRSF005457">
    <property type="entry name" value="Glx"/>
    <property type="match status" value="1"/>
</dbReference>
<dbReference type="SMART" id="SM00849">
    <property type="entry name" value="Lactamase_B"/>
    <property type="match status" value="1"/>
</dbReference>
<dbReference type="SUPFAM" id="SSF56281">
    <property type="entry name" value="Metallo-hydrolase/oxidoreductase"/>
    <property type="match status" value="1"/>
</dbReference>
<gene>
    <name type="primary">HAGH</name>
    <name type="ORF">RCJMB04_31d24</name>
</gene>
<evidence type="ECO:0000250" key="1">
    <source>
        <dbReference type="UniProtKB" id="Q16775"/>
    </source>
</evidence>
<evidence type="ECO:0000255" key="2"/>
<evidence type="ECO:0000303" key="3">
    <source>
    </source>
</evidence>
<evidence type="ECO:0000305" key="4"/>
<accession>Q5ZI23</accession>
<proteinExistence type="evidence at transcript level"/>
<comment type="function">
    <text evidence="1">Thiolesterase that catalyzes the hydrolysis of S-D-lactoyl-glutathione to form glutathione and D-lactic acid.</text>
</comment>
<comment type="catalytic activity">
    <reaction evidence="1">
        <text>an S-(2-hydroxyacyl)glutathione + H2O = a 2-hydroxy carboxylate + glutathione + H(+)</text>
        <dbReference type="Rhea" id="RHEA:21864"/>
        <dbReference type="ChEBI" id="CHEBI:15377"/>
        <dbReference type="ChEBI" id="CHEBI:15378"/>
        <dbReference type="ChEBI" id="CHEBI:57925"/>
        <dbReference type="ChEBI" id="CHEBI:58896"/>
        <dbReference type="ChEBI" id="CHEBI:71261"/>
        <dbReference type="EC" id="3.1.2.6"/>
    </reaction>
    <physiologicalReaction direction="left-to-right" evidence="1">
        <dbReference type="Rhea" id="RHEA:21865"/>
    </physiologicalReaction>
</comment>
<comment type="catalytic activity">
    <reaction evidence="1">
        <text>(R)-S-lactoylglutathione + H2O = (R)-lactate + glutathione + H(+)</text>
        <dbReference type="Rhea" id="RHEA:25245"/>
        <dbReference type="ChEBI" id="CHEBI:15377"/>
        <dbReference type="ChEBI" id="CHEBI:15378"/>
        <dbReference type="ChEBI" id="CHEBI:16004"/>
        <dbReference type="ChEBI" id="CHEBI:57474"/>
        <dbReference type="ChEBI" id="CHEBI:57925"/>
        <dbReference type="EC" id="3.1.2.6"/>
    </reaction>
    <physiologicalReaction direction="left-to-right" evidence="1">
        <dbReference type="Rhea" id="RHEA:25246"/>
    </physiologicalReaction>
</comment>
<comment type="cofactor">
    <cofactor evidence="1">
        <name>Zn(2+)</name>
        <dbReference type="ChEBI" id="CHEBI:29105"/>
    </cofactor>
    <text evidence="1">Binds 2 Zn(2+) ions per subunit.</text>
</comment>
<comment type="subunit">
    <text evidence="1">Monomer.</text>
</comment>
<comment type="subcellular location">
    <molecule>Isoform 1</molecule>
    <subcellularLocation>
        <location evidence="1">Mitochondrion matrix</location>
    </subcellularLocation>
</comment>
<comment type="subcellular location">
    <molecule>Isoform 2</molecule>
    <subcellularLocation>
        <location evidence="1">Cytoplasm</location>
    </subcellularLocation>
</comment>
<comment type="alternative products">
    <event type="alternative initiation"/>
    <isoform>
        <id>Q5ZI23-1</id>
        <name>1</name>
        <sequence type="displayed"/>
    </isoform>
    <isoform>
        <id>Q5ZI23-2</id>
        <name>2</name>
        <sequence type="described" ref="VSP_037933"/>
    </isoform>
</comment>
<comment type="miscellaneous">
    <molecule>Isoform 2</molecule>
    <text evidence="4">Produced by alternative initiation at Met-51 of isoform 1. Alternative initiation has been proven in human.</text>
</comment>
<comment type="similarity">
    <text evidence="4">Belongs to the metallo-beta-lactamase superfamily. Glyoxalase II family.</text>
</comment>
<comment type="caution">
    <text evidence="4">Only one single gene encoding glyoxalase II has been identified in vertebrates. In yeast and higher plants, separate genes encode the cytosolic and mitochondrial forms of glyoxalase II.</text>
</comment>
<sequence length="310" mass="34224">MLGGGWRSLGTALVALGAGALLRAGPAQLRAVFLHTEHEQRKSKTVAQANMKVEVLPALTDNYMYLLIDEETKEAAIVDPVQPQKVLDAVKKHGVKLTSVLTTHHHWDHAGGNEKLVKLETGLRVYGGDSRVGALTQKVSHLTSLKVGSLNVKCLCTPCHTSGHICYYVTKPNSSEPPAVFTGDTLFVAGCGKFFEGTPEEMYRALIEILGSLDPETRVYCGHEYTINNLKFARHVEPNNVSIQEKLAWAKAKYDSGEPTIPSTIAEEFTYNPFMRVREKTVQEHAGETDPIRTMGAIRKEKDNFRVPKD</sequence>
<organism>
    <name type="scientific">Gallus gallus</name>
    <name type="common">Chicken</name>
    <dbReference type="NCBI Taxonomy" id="9031"/>
    <lineage>
        <taxon>Eukaryota</taxon>
        <taxon>Metazoa</taxon>
        <taxon>Chordata</taxon>
        <taxon>Craniata</taxon>
        <taxon>Vertebrata</taxon>
        <taxon>Euteleostomi</taxon>
        <taxon>Archelosauria</taxon>
        <taxon>Archosauria</taxon>
        <taxon>Dinosauria</taxon>
        <taxon>Saurischia</taxon>
        <taxon>Theropoda</taxon>
        <taxon>Coelurosauria</taxon>
        <taxon>Aves</taxon>
        <taxon>Neognathae</taxon>
        <taxon>Galloanserae</taxon>
        <taxon>Galliformes</taxon>
        <taxon>Phasianidae</taxon>
        <taxon>Phasianinae</taxon>
        <taxon>Gallus</taxon>
    </lineage>
</organism>
<keyword id="KW-0024">Alternative initiation</keyword>
<keyword id="KW-0963">Cytoplasm</keyword>
<keyword id="KW-0378">Hydrolase</keyword>
<keyword id="KW-0479">Metal-binding</keyword>
<keyword id="KW-0496">Mitochondrion</keyword>
<keyword id="KW-1185">Reference proteome</keyword>
<keyword id="KW-0809">Transit peptide</keyword>
<keyword id="KW-0862">Zinc</keyword>
<name>GLO2_CHICK</name>